<protein>
    <recommendedName>
        <fullName>Putative uncharacterized protein YJL135W</fullName>
    </recommendedName>
</protein>
<evidence type="ECO:0000305" key="1"/>
<evidence type="ECO:0000305" key="2">
    <source>
    </source>
</evidence>
<name>YJN5_YEAST</name>
<organism>
    <name type="scientific">Saccharomyces cerevisiae (strain ATCC 204508 / S288c)</name>
    <name type="common">Baker's yeast</name>
    <dbReference type="NCBI Taxonomy" id="559292"/>
    <lineage>
        <taxon>Eukaryota</taxon>
        <taxon>Fungi</taxon>
        <taxon>Dikarya</taxon>
        <taxon>Ascomycota</taxon>
        <taxon>Saccharomycotina</taxon>
        <taxon>Saccharomycetes</taxon>
        <taxon>Saccharomycetales</taxon>
        <taxon>Saccharomycetaceae</taxon>
        <taxon>Saccharomyces</taxon>
    </lineage>
</organism>
<gene>
    <name type="ordered locus">YJL135W</name>
    <name type="ORF">J0666</name>
</gene>
<reference key="1">
    <citation type="journal article" date="1996" name="Yeast">
        <title>Sequence analysis of a 40.7 kb segment from the left arm of yeast chromosome X reveals 14 known genes and 13 new open reading frames including homologues of genes clustered on the right arm of chromosome XI.</title>
        <authorList>
            <person name="Katsoulou C."/>
            <person name="Tzermia M."/>
            <person name="Tavernarakis N."/>
            <person name="Alexandraki D."/>
        </authorList>
    </citation>
    <scope>NUCLEOTIDE SEQUENCE [GENOMIC DNA]</scope>
    <source>
        <strain>ATCC 96604 / S288c / FY1679</strain>
    </source>
</reference>
<reference key="2">
    <citation type="journal article" date="1996" name="EMBO J.">
        <title>Complete nucleotide sequence of Saccharomyces cerevisiae chromosome X.</title>
        <authorList>
            <person name="Galibert F."/>
            <person name="Alexandraki D."/>
            <person name="Baur A."/>
            <person name="Boles E."/>
            <person name="Chalwatzis N."/>
            <person name="Chuat J.-C."/>
            <person name="Coster F."/>
            <person name="Cziepluch C."/>
            <person name="de Haan M."/>
            <person name="Domdey H."/>
            <person name="Durand P."/>
            <person name="Entian K.-D."/>
            <person name="Gatius M."/>
            <person name="Goffeau A."/>
            <person name="Grivell L.A."/>
            <person name="Hennemann A."/>
            <person name="Herbert C.J."/>
            <person name="Heumann K."/>
            <person name="Hilger F."/>
            <person name="Hollenberg C.P."/>
            <person name="Huang M.-E."/>
            <person name="Jacq C."/>
            <person name="Jauniaux J.-C."/>
            <person name="Katsoulou C."/>
            <person name="Kirchrath L."/>
            <person name="Kleine K."/>
            <person name="Kordes E."/>
            <person name="Koetter P."/>
            <person name="Liebl S."/>
            <person name="Louis E.J."/>
            <person name="Manus V."/>
            <person name="Mewes H.-W."/>
            <person name="Miosga T."/>
            <person name="Obermaier B."/>
            <person name="Perea J."/>
            <person name="Pohl T.M."/>
            <person name="Portetelle D."/>
            <person name="Pujol A."/>
            <person name="Purnelle B."/>
            <person name="Ramezani Rad M."/>
            <person name="Rasmussen S.W."/>
            <person name="Rose M."/>
            <person name="Rossau R."/>
            <person name="Schaaff-Gerstenschlaeger I."/>
            <person name="Smits P.H.M."/>
            <person name="Scarcez T."/>
            <person name="Soriano N."/>
            <person name="To Van D."/>
            <person name="Tzermia M."/>
            <person name="Van Broekhoven A."/>
            <person name="Vandenbol M."/>
            <person name="Wedler H."/>
            <person name="von Wettstein D."/>
            <person name="Wambutt R."/>
            <person name="Zagulski M."/>
            <person name="Zollner A."/>
            <person name="Karpfinger-Hartl L."/>
        </authorList>
    </citation>
    <scope>NUCLEOTIDE SEQUENCE [LARGE SCALE GENOMIC DNA]</scope>
    <source>
        <strain>ATCC 204508 / S288c</strain>
    </source>
</reference>
<reference key="3">
    <citation type="journal article" date="2014" name="G3 (Bethesda)">
        <title>The reference genome sequence of Saccharomyces cerevisiae: Then and now.</title>
        <authorList>
            <person name="Engel S.R."/>
            <person name="Dietrich F.S."/>
            <person name="Fisk D.G."/>
            <person name="Binkley G."/>
            <person name="Balakrishnan R."/>
            <person name="Costanzo M.C."/>
            <person name="Dwight S.S."/>
            <person name="Hitz B.C."/>
            <person name="Karra K."/>
            <person name="Nash R.S."/>
            <person name="Weng S."/>
            <person name="Wong E.D."/>
            <person name="Lloyd P."/>
            <person name="Skrzypek M.S."/>
            <person name="Miyasato S.R."/>
            <person name="Simison M."/>
            <person name="Cherry J.M."/>
        </authorList>
    </citation>
    <scope>GENOME REANNOTATION</scope>
    <source>
        <strain>ATCC 204508 / S288c</strain>
    </source>
</reference>
<feature type="chain" id="PRO_0000203036" description="Putative uncharacterized protein YJL135W">
    <location>
        <begin position="1"/>
        <end position="105"/>
    </location>
</feature>
<accession>P47012</accession>
<proteinExistence type="uncertain"/>
<dbReference type="EMBL" id="X87371">
    <property type="protein sequence ID" value="CAA60820.1"/>
    <property type="molecule type" value="Genomic_DNA"/>
</dbReference>
<dbReference type="EMBL" id="Z49410">
    <property type="protein sequence ID" value="CAA89429.1"/>
    <property type="molecule type" value="Genomic_DNA"/>
</dbReference>
<dbReference type="PIR" id="S56917">
    <property type="entry name" value="S56917"/>
</dbReference>
<dbReference type="DIP" id="DIP-2072N"/>
<dbReference type="IntAct" id="P47012">
    <property type="interactions" value="1"/>
</dbReference>
<dbReference type="STRING" id="4932.YJL135W"/>
<dbReference type="PaxDb" id="4932-YJL135W"/>
<dbReference type="EnsemblFungi" id="YJL135W_mRNA">
    <property type="protein sequence ID" value="YJL135W"/>
    <property type="gene ID" value="YJL135W"/>
</dbReference>
<dbReference type="AGR" id="SGD:S000003671"/>
<dbReference type="SGD" id="S000003671">
    <property type="gene designation" value="YJL135W"/>
</dbReference>
<dbReference type="HOGENOM" id="CLU_2238729_0_0_1"/>
<sequence length="105" mass="12374">MFNQLLLEPNMCKISPDIHFTNNKAKMLQKMFLSTKLNYCLYHVTELRLAVLFFPHLALKLSSHYKGSKKKQSLRKFVYIQPSRRGNSSNLPDQRTQAICIDKKW</sequence>
<comment type="miscellaneous">
    <text evidence="1">Partially overlaps LCB3.</text>
</comment>
<comment type="caution">
    <text evidence="2">Product of a dubious gene prediction unlikely to encode a functional protein. Because of that it is not part of the S.cerevisiae S288c complete/reference proteome set.</text>
</comment>